<proteinExistence type="inferred from homology"/>
<protein>
    <recommendedName>
        <fullName evidence="2">Small ribosomal subunit protein uS12</fullName>
    </recommendedName>
    <alternativeName>
        <fullName evidence="3">30S ribosomal protein S12</fullName>
    </alternativeName>
</protein>
<evidence type="ECO:0000250" key="1"/>
<evidence type="ECO:0000255" key="2">
    <source>
        <dbReference type="HAMAP-Rule" id="MF_00403"/>
    </source>
</evidence>
<evidence type="ECO:0000305" key="3"/>
<sequence length="124" mass="13605">MATVNQLVRKPRAPKVDKTNVPALAACPQKRGVCTRVYTTTPKKPNSALRKVARVRLTNGFEVTSYIGGEGHNLQEHSVILIRGGRVKDLPGVRYHTVRGALDCAGVSERRQGRSKYGAKRPKS</sequence>
<keyword id="KW-0488">Methylation</keyword>
<keyword id="KW-0687">Ribonucleoprotein</keyword>
<keyword id="KW-0689">Ribosomal protein</keyword>
<keyword id="KW-0694">RNA-binding</keyword>
<keyword id="KW-0699">rRNA-binding</keyword>
<keyword id="KW-0820">tRNA-binding</keyword>
<organism>
    <name type="scientific">Shewanella halifaxensis (strain HAW-EB4)</name>
    <dbReference type="NCBI Taxonomy" id="458817"/>
    <lineage>
        <taxon>Bacteria</taxon>
        <taxon>Pseudomonadati</taxon>
        <taxon>Pseudomonadota</taxon>
        <taxon>Gammaproteobacteria</taxon>
        <taxon>Alteromonadales</taxon>
        <taxon>Shewanellaceae</taxon>
        <taxon>Shewanella</taxon>
    </lineage>
</organism>
<gene>
    <name evidence="2" type="primary">rpsL</name>
    <name type="ordered locus">Shal_4139</name>
</gene>
<name>RS12_SHEHH</name>
<feature type="chain" id="PRO_1000080415" description="Small ribosomal subunit protein uS12">
    <location>
        <begin position="1"/>
        <end position="124"/>
    </location>
</feature>
<feature type="modified residue" description="3-methylthioaspartic acid" evidence="1">
    <location>
        <position position="89"/>
    </location>
</feature>
<dbReference type="EMBL" id="CP000931">
    <property type="protein sequence ID" value="ABZ78679.1"/>
    <property type="molecule type" value="Genomic_DNA"/>
</dbReference>
<dbReference type="RefSeq" id="WP_012153454.1">
    <property type="nucleotide sequence ID" value="NC_010334.1"/>
</dbReference>
<dbReference type="SMR" id="B0TM17"/>
<dbReference type="STRING" id="458817.Shal_4139"/>
<dbReference type="KEGG" id="shl:Shal_4139"/>
<dbReference type="eggNOG" id="COG0048">
    <property type="taxonomic scope" value="Bacteria"/>
</dbReference>
<dbReference type="HOGENOM" id="CLU_104295_1_2_6"/>
<dbReference type="OrthoDB" id="9802366at2"/>
<dbReference type="Proteomes" id="UP000001317">
    <property type="component" value="Chromosome"/>
</dbReference>
<dbReference type="GO" id="GO:0015935">
    <property type="term" value="C:small ribosomal subunit"/>
    <property type="evidence" value="ECO:0007669"/>
    <property type="project" value="InterPro"/>
</dbReference>
<dbReference type="GO" id="GO:0019843">
    <property type="term" value="F:rRNA binding"/>
    <property type="evidence" value="ECO:0007669"/>
    <property type="project" value="UniProtKB-UniRule"/>
</dbReference>
<dbReference type="GO" id="GO:0003735">
    <property type="term" value="F:structural constituent of ribosome"/>
    <property type="evidence" value="ECO:0007669"/>
    <property type="project" value="InterPro"/>
</dbReference>
<dbReference type="GO" id="GO:0000049">
    <property type="term" value="F:tRNA binding"/>
    <property type="evidence" value="ECO:0007669"/>
    <property type="project" value="UniProtKB-UniRule"/>
</dbReference>
<dbReference type="GO" id="GO:0006412">
    <property type="term" value="P:translation"/>
    <property type="evidence" value="ECO:0007669"/>
    <property type="project" value="UniProtKB-UniRule"/>
</dbReference>
<dbReference type="CDD" id="cd03368">
    <property type="entry name" value="Ribosomal_S12"/>
    <property type="match status" value="1"/>
</dbReference>
<dbReference type="FunFam" id="2.40.50.140:FF:000001">
    <property type="entry name" value="30S ribosomal protein S12"/>
    <property type="match status" value="1"/>
</dbReference>
<dbReference type="Gene3D" id="2.40.50.140">
    <property type="entry name" value="Nucleic acid-binding proteins"/>
    <property type="match status" value="1"/>
</dbReference>
<dbReference type="HAMAP" id="MF_00403_B">
    <property type="entry name" value="Ribosomal_uS12_B"/>
    <property type="match status" value="1"/>
</dbReference>
<dbReference type="InterPro" id="IPR012340">
    <property type="entry name" value="NA-bd_OB-fold"/>
</dbReference>
<dbReference type="InterPro" id="IPR006032">
    <property type="entry name" value="Ribosomal_uS12"/>
</dbReference>
<dbReference type="InterPro" id="IPR005679">
    <property type="entry name" value="Ribosomal_uS12_bac"/>
</dbReference>
<dbReference type="NCBIfam" id="TIGR00981">
    <property type="entry name" value="rpsL_bact"/>
    <property type="match status" value="1"/>
</dbReference>
<dbReference type="PANTHER" id="PTHR11652">
    <property type="entry name" value="30S RIBOSOMAL PROTEIN S12 FAMILY MEMBER"/>
    <property type="match status" value="1"/>
</dbReference>
<dbReference type="Pfam" id="PF00164">
    <property type="entry name" value="Ribosom_S12_S23"/>
    <property type="match status" value="1"/>
</dbReference>
<dbReference type="PIRSF" id="PIRSF002133">
    <property type="entry name" value="Ribosomal_S12/S23"/>
    <property type="match status" value="1"/>
</dbReference>
<dbReference type="PRINTS" id="PR01034">
    <property type="entry name" value="RIBOSOMALS12"/>
</dbReference>
<dbReference type="SUPFAM" id="SSF50249">
    <property type="entry name" value="Nucleic acid-binding proteins"/>
    <property type="match status" value="1"/>
</dbReference>
<dbReference type="PROSITE" id="PS00055">
    <property type="entry name" value="RIBOSOMAL_S12"/>
    <property type="match status" value="1"/>
</dbReference>
<reference key="1">
    <citation type="submission" date="2008-01" db="EMBL/GenBank/DDBJ databases">
        <title>Complete sequence of Shewanella halifaxensis HAW-EB4.</title>
        <authorList>
            <consortium name="US DOE Joint Genome Institute"/>
            <person name="Copeland A."/>
            <person name="Lucas S."/>
            <person name="Lapidus A."/>
            <person name="Glavina del Rio T."/>
            <person name="Dalin E."/>
            <person name="Tice H."/>
            <person name="Bruce D."/>
            <person name="Goodwin L."/>
            <person name="Pitluck S."/>
            <person name="Sims D."/>
            <person name="Brettin T."/>
            <person name="Detter J.C."/>
            <person name="Han C."/>
            <person name="Kuske C.R."/>
            <person name="Schmutz J."/>
            <person name="Larimer F."/>
            <person name="Land M."/>
            <person name="Hauser L."/>
            <person name="Kyrpides N."/>
            <person name="Kim E."/>
            <person name="Zhao J.-S."/>
            <person name="Richardson P."/>
        </authorList>
    </citation>
    <scope>NUCLEOTIDE SEQUENCE [LARGE SCALE GENOMIC DNA]</scope>
    <source>
        <strain>HAW-EB4</strain>
    </source>
</reference>
<comment type="function">
    <text evidence="2">With S4 and S5 plays an important role in translational accuracy.</text>
</comment>
<comment type="function">
    <text evidence="2">Interacts with and stabilizes bases of the 16S rRNA that are involved in tRNA selection in the A site and with the mRNA backbone. Located at the interface of the 30S and 50S subunits, it traverses the body of the 30S subunit contacting proteins on the other side and probably holding the rRNA structure together. The combined cluster of proteins S8, S12 and S17 appears to hold together the shoulder and platform of the 30S subunit.</text>
</comment>
<comment type="subunit">
    <text evidence="2">Part of the 30S ribosomal subunit. Contacts proteins S8 and S17. May interact with IF1 in the 30S initiation complex.</text>
</comment>
<comment type="similarity">
    <text evidence="2">Belongs to the universal ribosomal protein uS12 family.</text>
</comment>
<accession>B0TM17</accession>